<dbReference type="EC" id="3.2.1.-" evidence="3"/>
<dbReference type="EMBL" id="AE007870">
    <property type="protein sequence ID" value="AAK90105.1"/>
    <property type="molecule type" value="Genomic_DNA"/>
</dbReference>
<dbReference type="PIR" id="AG2960">
    <property type="entry name" value="AG2960"/>
</dbReference>
<dbReference type="PIR" id="G98322">
    <property type="entry name" value="G98322"/>
</dbReference>
<dbReference type="RefSeq" id="NP_357320.1">
    <property type="nucleotide sequence ID" value="NC_003063.2"/>
</dbReference>
<dbReference type="RefSeq" id="WP_010972911.1">
    <property type="nucleotide sequence ID" value="NC_003063.2"/>
</dbReference>
<dbReference type="PDB" id="5OHS">
    <property type="method" value="X-ray"/>
    <property type="resolution" value="1.97 A"/>
    <property type="chains" value="A/B/C/D/E/F/G/H=1-664"/>
</dbReference>
<dbReference type="PDB" id="5OHY">
    <property type="method" value="X-ray"/>
    <property type="resolution" value="1.77 A"/>
    <property type="chains" value="A/B/C/D=1-664"/>
</dbReference>
<dbReference type="PDB" id="7OFX">
    <property type="method" value="X-ray"/>
    <property type="resolution" value="2.15 A"/>
    <property type="chains" value="A/B/C/D=1-664"/>
</dbReference>
<dbReference type="PDBsum" id="5OHS"/>
<dbReference type="PDBsum" id="5OHY"/>
<dbReference type="PDBsum" id="7OFX"/>
<dbReference type="SMR" id="A9CEZ0"/>
<dbReference type="STRING" id="176299.Atu3285"/>
<dbReference type="CAZy" id="GH31">
    <property type="family name" value="Glycoside Hydrolase Family 31"/>
</dbReference>
<dbReference type="EnsemblBacteria" id="AAK90105">
    <property type="protein sequence ID" value="AAK90105"/>
    <property type="gene ID" value="Atu3285"/>
</dbReference>
<dbReference type="GeneID" id="1135159"/>
<dbReference type="KEGG" id="atu:Atu3285"/>
<dbReference type="PATRIC" id="fig|176299.10.peg.3126"/>
<dbReference type="eggNOG" id="COG1501">
    <property type="taxonomic scope" value="Bacteria"/>
</dbReference>
<dbReference type="HOGENOM" id="CLU_017110_0_1_5"/>
<dbReference type="OrthoDB" id="176168at2"/>
<dbReference type="PhylomeDB" id="A9CEZ0"/>
<dbReference type="BioCyc" id="AGRO:ATU3285-MONOMER"/>
<dbReference type="BioCyc" id="MetaCyc:ATU3285-MONOMER"/>
<dbReference type="Proteomes" id="UP000000813">
    <property type="component" value="Chromosome linear"/>
</dbReference>
<dbReference type="GO" id="GO:0030246">
    <property type="term" value="F:carbohydrate binding"/>
    <property type="evidence" value="ECO:0007669"/>
    <property type="project" value="InterPro"/>
</dbReference>
<dbReference type="GO" id="GO:0004553">
    <property type="term" value="F:hydrolase activity, hydrolyzing O-glycosyl compounds"/>
    <property type="evidence" value="ECO:0007669"/>
    <property type="project" value="InterPro"/>
</dbReference>
<dbReference type="GO" id="GO:0005975">
    <property type="term" value="P:carbohydrate metabolic process"/>
    <property type="evidence" value="ECO:0007669"/>
    <property type="project" value="InterPro"/>
</dbReference>
<dbReference type="CDD" id="cd06594">
    <property type="entry name" value="GH31_glucosidase_YihQ"/>
    <property type="match status" value="1"/>
</dbReference>
<dbReference type="CDD" id="cd14752">
    <property type="entry name" value="GH31_N"/>
    <property type="match status" value="1"/>
</dbReference>
<dbReference type="Gene3D" id="3.20.20.80">
    <property type="entry name" value="Glycosidases"/>
    <property type="match status" value="1"/>
</dbReference>
<dbReference type="Gene3D" id="2.60.40.1760">
    <property type="entry name" value="glycosyl hydrolase (family 31)"/>
    <property type="match status" value="1"/>
</dbReference>
<dbReference type="Gene3D" id="2.60.40.1180">
    <property type="entry name" value="Golgi alpha-mannosidase II"/>
    <property type="match status" value="1"/>
</dbReference>
<dbReference type="InterPro" id="IPR011013">
    <property type="entry name" value="Gal_mutarotase_sf_dom"/>
</dbReference>
<dbReference type="InterPro" id="IPR048395">
    <property type="entry name" value="Glyco_hydro_31_C"/>
</dbReference>
<dbReference type="InterPro" id="IPR000322">
    <property type="entry name" value="Glyco_hydro_31_TIM"/>
</dbReference>
<dbReference type="InterPro" id="IPR013780">
    <property type="entry name" value="Glyco_hydro_b"/>
</dbReference>
<dbReference type="InterPro" id="IPR017853">
    <property type="entry name" value="Glycoside_hydrolase_SF"/>
</dbReference>
<dbReference type="InterPro" id="IPR052990">
    <property type="entry name" value="Sulfoquinovosidase_GH31"/>
</dbReference>
<dbReference type="InterPro" id="IPR044112">
    <property type="entry name" value="YihQ_TIM-like"/>
</dbReference>
<dbReference type="NCBIfam" id="NF007746">
    <property type="entry name" value="PRK10426.1"/>
    <property type="match status" value="1"/>
</dbReference>
<dbReference type="PANTHER" id="PTHR46959">
    <property type="entry name" value="SULFOQUINOVOSIDASE"/>
    <property type="match status" value="1"/>
</dbReference>
<dbReference type="PANTHER" id="PTHR46959:SF2">
    <property type="entry name" value="SULFOQUINOVOSIDASE"/>
    <property type="match status" value="1"/>
</dbReference>
<dbReference type="Pfam" id="PF01055">
    <property type="entry name" value="Glyco_hydro_31_2nd"/>
    <property type="match status" value="1"/>
</dbReference>
<dbReference type="Pfam" id="PF21365">
    <property type="entry name" value="Glyco_hydro_31_3rd"/>
    <property type="match status" value="1"/>
</dbReference>
<dbReference type="SUPFAM" id="SSF51445">
    <property type="entry name" value="(Trans)glycosidases"/>
    <property type="match status" value="1"/>
</dbReference>
<dbReference type="SUPFAM" id="SSF74650">
    <property type="entry name" value="Galactose mutarotase-like"/>
    <property type="match status" value="1"/>
</dbReference>
<dbReference type="SUPFAM" id="SSF51011">
    <property type="entry name" value="Glycosyl hydrolase domain"/>
    <property type="match status" value="1"/>
</dbReference>
<comment type="function">
    <text evidence="3 4">Part of the sulfoquinovose monooxygenase (sulfo-SMO) pathway, a D-sulfoquinovose degradation pathway that enables the complete utilization of all carbons within sulfoquinovose (SQ) with concomitant production of inorganic sulfite (PubMed:35074914). Catalyzes the first step of the pathway, the hydrolysis of sulfoquinovosyl glycerol (SQGro) to release sulfoquinovose (SQ) (PubMed:30276262). Hydrolyzes both epimers of SQGro, with a preference for the natural 2'R isomer (PubMed:30276262). In vitro, can use the substrate analog para-nitrophenyl alpha-sulfoquinovoside (PNPSQ), but shows no detectable activity toward 4-nitrophenyl alpha-D-glucopyranoside (PNPGlc) (PubMed:30276262).</text>
</comment>
<comment type="catalytic activity">
    <reaction evidence="3">
        <text>3-(6-sulfo-alpha-D-quinovosyl)glycerol + H2O = 6-sulfo-alpha-D-quinovose + glycerol</text>
        <dbReference type="Rhea" id="RHEA:70727"/>
        <dbReference type="ChEBI" id="CHEBI:15377"/>
        <dbReference type="ChEBI" id="CHEBI:17754"/>
        <dbReference type="ChEBI" id="CHEBI:142956"/>
        <dbReference type="ChEBI" id="CHEBI:190012"/>
    </reaction>
    <physiologicalReaction direction="left-to-right" evidence="3">
        <dbReference type="Rhea" id="RHEA:70728"/>
    </physiologicalReaction>
</comment>
<comment type="biophysicochemical properties">
    <kinetics>
        <KM evidence="3">0.21 mM for para-nitrophenyl alpha-sulfoquinovoside</KM>
        <text evidence="3">kcat is 22.3 sec(-1) with para-nitrophenyl alpha-sulfoquinovoside as substrate.</text>
    </kinetics>
    <phDependence>
        <text evidence="3">Optimum pH is 8.0.</text>
    </phDependence>
</comment>
<comment type="induction">
    <text evidence="4">Induced during growth on sulfoquinovose.</text>
</comment>
<comment type="domain">
    <text evidence="3">Structural analysis revealed the molecular coevolution of catalytically important amino acid pairs directly involved in substrate recognition, as well as structurally important pairs distal to the active site.</text>
</comment>
<comment type="similarity">
    <text evidence="7">Belongs to the glycosyl hydrolase 31 family.</text>
</comment>
<gene>
    <name evidence="6" type="primary">smoI</name>
    <name evidence="9" type="ordered locus">Atu3285</name>
</gene>
<evidence type="ECO:0000250" key="1">
    <source>
        <dbReference type="UniProtKB" id="P31434"/>
    </source>
</evidence>
<evidence type="ECO:0000250" key="2">
    <source>
        <dbReference type="UniProtKB" id="P32138"/>
    </source>
</evidence>
<evidence type="ECO:0000269" key="3">
    <source>
    </source>
</evidence>
<evidence type="ECO:0000269" key="4">
    <source>
    </source>
</evidence>
<evidence type="ECO:0000303" key="5">
    <source>
    </source>
</evidence>
<evidence type="ECO:0000303" key="6">
    <source>
    </source>
</evidence>
<evidence type="ECO:0000305" key="7"/>
<evidence type="ECO:0000305" key="8">
    <source>
    </source>
</evidence>
<evidence type="ECO:0000312" key="9">
    <source>
        <dbReference type="EMBL" id="AAK90105.1"/>
    </source>
</evidence>
<evidence type="ECO:0007744" key="10">
    <source>
        <dbReference type="PDB" id="5OHS"/>
    </source>
</evidence>
<evidence type="ECO:0007744" key="11">
    <source>
        <dbReference type="PDB" id="5OHY"/>
    </source>
</evidence>
<evidence type="ECO:0007744" key="12">
    <source>
        <dbReference type="PDB" id="7OFX"/>
    </source>
</evidence>
<evidence type="ECO:0007829" key="13">
    <source>
        <dbReference type="PDB" id="5OHY"/>
    </source>
</evidence>
<keyword id="KW-0002">3D-structure</keyword>
<keyword id="KW-0326">Glycosidase</keyword>
<keyword id="KW-0378">Hydrolase</keyword>
<keyword id="KW-1185">Reference proteome</keyword>
<organism>
    <name type="scientific">Agrobacterium fabrum (strain C58 / ATCC 33970)</name>
    <name type="common">Agrobacterium tumefaciens (strain C58)</name>
    <dbReference type="NCBI Taxonomy" id="176299"/>
    <lineage>
        <taxon>Bacteria</taxon>
        <taxon>Pseudomonadati</taxon>
        <taxon>Pseudomonadota</taxon>
        <taxon>Alphaproteobacteria</taxon>
        <taxon>Hyphomicrobiales</taxon>
        <taxon>Rhizobiaceae</taxon>
        <taxon>Rhizobium/Agrobacterium group</taxon>
        <taxon>Agrobacterium</taxon>
        <taxon>Agrobacterium tumefaciens complex</taxon>
    </lineage>
</organism>
<sequence>MHFETTKDGFTIAIGNRIILSHSPDKPAFFAGFGEERMDMYRGNFDIEDYVIERTALRHAEVSGDSVTLSSAPGQAPRLRLTLDGNAIRLTALDETINRLWLRVVAETDEHVWGGGEQMSYFDMRGRRFPLWTSEPGVGRDKTTEITFKSDVSGKAGGDYYNTNYPQPTWLSSRKYALHVETSAYSVFDFRNGDFHEIEIWAVPEKIEFFAGDSFADIVSALSLHFGRQPELPDWVYNGAIIGLKDGVNSFARLEKIRAAGTKVSGLWCEDWVGLRQTSFGARLFWDWQANDTRYPHLRQKIAELADQGIRFLGYVNPYLCVDGPLFPVAESAGYFATDVDGKTALVDFGEFDCGVVDFTNPAAADWFAEEIIGKNMLDFGLSGWMADFGEYLPIDIKLSNGVDAKLMHNAWPTLWAEVNAKGVESRGKTGEALFFMRAGFTGVQAHCPLIWGGDQSVDFSRHDGLVTVICGALSSGLMGNAYHHSDIGGYTSLFGNVRTAELIMRWTEMAAFTPVMRTHEGNRPRDNLQIDQDETVLAHFARMTAIYVALAPYLKSLSAEAAKTGLPVQRPLFLHYENEPQTYAVQDCYLYGADMLVAPVWKAGETQRSLYLPGHGEWVHLWSGKRHAGGRDITVETPLGEPAVFYRADSSHHRLFEQLRTIG</sequence>
<protein>
    <recommendedName>
        <fullName evidence="5">Sulfoquinovosidase</fullName>
        <shortName evidence="5">SQase</shortName>
        <ecNumber evidence="3">3.2.1.-</ecNumber>
    </recommendedName>
    <alternativeName>
        <fullName evidence="5">AtSQase</fullName>
    </alternativeName>
    <alternativeName>
        <fullName evidence="6">SQ monooxygenase cluster protein I</fullName>
    </alternativeName>
</protein>
<feature type="chain" id="PRO_0000458905" description="Sulfoquinovosidase">
    <location>
        <begin position="1"/>
        <end position="664"/>
    </location>
</feature>
<feature type="active site" description="Nucleophile" evidence="2">
    <location>
        <position position="388"/>
    </location>
</feature>
<feature type="active site" evidence="1">
    <location>
        <position position="391"/>
    </location>
</feature>
<feature type="active site" description="Proton donor" evidence="2">
    <location>
        <position position="455"/>
    </location>
</feature>
<feature type="binding site" evidence="4 12">
    <location>
        <position position="135"/>
    </location>
    <ligand>
        <name>3-(6-sulfo-alpha-D-quinovosyl)glycerol</name>
        <dbReference type="ChEBI" id="CHEBI:190012"/>
    </ligand>
</feature>
<feature type="binding site" evidence="4 8 10 12">
    <location>
        <position position="270"/>
    </location>
    <ligand>
        <name>3-(6-sulfo-alpha-D-quinovosyl)glycerol</name>
        <dbReference type="ChEBI" id="CHEBI:190012"/>
    </ligand>
</feature>
<feature type="binding site" evidence="4 8 10 12">
    <location>
        <position position="283"/>
    </location>
    <ligand>
        <name>3-(6-sulfo-alpha-D-quinovosyl)glycerol</name>
        <dbReference type="ChEBI" id="CHEBI:190012"/>
    </ligand>
</feature>
<feature type="binding site" evidence="4 8 10 12">
    <location>
        <position position="284"/>
    </location>
    <ligand>
        <name>3-(6-sulfo-alpha-D-quinovosyl)glycerol</name>
        <dbReference type="ChEBI" id="CHEBI:190012"/>
    </ligand>
</feature>
<feature type="binding site" evidence="4 8 10 12">
    <location>
        <position position="286"/>
    </location>
    <ligand>
        <name>3-(6-sulfo-alpha-D-quinovosyl)glycerol</name>
        <dbReference type="ChEBI" id="CHEBI:190012"/>
    </ligand>
</feature>
<feature type="binding site" evidence="4 12">
    <location>
        <position position="438"/>
    </location>
    <ligand>
        <name>3-(6-sulfo-alpha-D-quinovosyl)glycerol</name>
        <dbReference type="ChEBI" id="CHEBI:190012"/>
    </ligand>
</feature>
<feature type="binding site" evidence="4 8 10 12">
    <location>
        <position position="520"/>
    </location>
    <ligand>
        <name>3-(6-sulfo-alpha-D-quinovosyl)glycerol</name>
        <dbReference type="ChEBI" id="CHEBI:190012"/>
    </ligand>
</feature>
<feature type="mutagenesis site" description="6000-fold decrease in catalytic efficiency with PNPSQ as substrate. 250-fold decrease in catalytic efficiency with PNPSQ as substrate; when associated with Q-270." evidence="3">
    <original>K</original>
    <variation>Q</variation>
    <location>
        <position position="245"/>
    </location>
</feature>
<feature type="mutagenesis site" description="6000-fold decrease in catalytic efficiency with PNPSQ as substrate. 250-fold decrease in catalytic efficiency with PNPSQ as substrate; when associated with Q-245." evidence="3">
    <original>E</original>
    <variation>Q</variation>
    <location>
        <position position="270"/>
    </location>
</feature>
<feature type="strand" evidence="13">
    <location>
        <begin position="2"/>
        <end position="5"/>
    </location>
</feature>
<feature type="strand" evidence="13">
    <location>
        <begin position="7"/>
        <end position="14"/>
    </location>
</feature>
<feature type="strand" evidence="13">
    <location>
        <begin position="17"/>
        <end position="22"/>
    </location>
</feature>
<feature type="strand" evidence="13">
    <location>
        <begin position="24"/>
        <end position="26"/>
    </location>
</feature>
<feature type="strand" evidence="13">
    <location>
        <begin position="28"/>
        <end position="41"/>
    </location>
</feature>
<feature type="strand" evidence="13">
    <location>
        <begin position="44"/>
        <end position="56"/>
    </location>
</feature>
<feature type="strand" evidence="13">
    <location>
        <begin position="59"/>
        <end position="61"/>
    </location>
</feature>
<feature type="strand" evidence="13">
    <location>
        <begin position="67"/>
        <end position="72"/>
    </location>
</feature>
<feature type="strand" evidence="13">
    <location>
        <begin position="79"/>
        <end position="84"/>
    </location>
</feature>
<feature type="strand" evidence="13">
    <location>
        <begin position="87"/>
        <end position="94"/>
    </location>
</feature>
<feature type="strand" evidence="13">
    <location>
        <begin position="99"/>
        <end position="105"/>
    </location>
</feature>
<feature type="strand" evidence="13">
    <location>
        <begin position="112"/>
        <end position="117"/>
    </location>
</feature>
<feature type="strand" evidence="13">
    <location>
        <begin position="127"/>
        <end position="131"/>
    </location>
</feature>
<feature type="helix" evidence="13">
    <location>
        <begin position="145"/>
        <end position="154"/>
    </location>
</feature>
<feature type="strand" evidence="13">
    <location>
        <begin position="166"/>
        <end position="172"/>
    </location>
</feature>
<feature type="turn" evidence="13">
    <location>
        <begin position="173"/>
        <end position="175"/>
    </location>
</feature>
<feature type="strand" evidence="13">
    <location>
        <begin position="176"/>
        <end position="181"/>
    </location>
</feature>
<feature type="strand" evidence="13">
    <location>
        <begin position="186"/>
        <end position="189"/>
    </location>
</feature>
<feature type="strand" evidence="13">
    <location>
        <begin position="193"/>
        <end position="202"/>
    </location>
</feature>
<feature type="strand" evidence="13">
    <location>
        <begin position="205"/>
        <end position="211"/>
    </location>
</feature>
<feature type="helix" evidence="13">
    <location>
        <begin position="215"/>
        <end position="226"/>
    </location>
</feature>
<feature type="helix" evidence="13">
    <location>
        <begin position="234"/>
        <end position="238"/>
    </location>
</feature>
<feature type="strand" evidence="13">
    <location>
        <begin position="240"/>
        <end position="243"/>
    </location>
</feature>
<feature type="helix" evidence="13">
    <location>
        <begin position="249"/>
        <end position="259"/>
    </location>
</feature>
<feature type="strand" evidence="13">
    <location>
        <begin position="264"/>
        <end position="268"/>
    </location>
</feature>
<feature type="helix" evidence="13">
    <location>
        <begin position="270"/>
        <end position="273"/>
    </location>
</feature>
<feature type="strand" evidence="13">
    <location>
        <begin position="275"/>
        <end position="277"/>
    </location>
</feature>
<feature type="strand" evidence="13">
    <location>
        <begin position="282"/>
        <end position="284"/>
    </location>
</feature>
<feature type="turn" evidence="13">
    <location>
        <begin position="292"/>
        <end position="294"/>
    </location>
</feature>
<feature type="helix" evidence="13">
    <location>
        <begin position="298"/>
        <end position="307"/>
    </location>
</feature>
<feature type="strand" evidence="13">
    <location>
        <begin position="311"/>
        <end position="316"/>
    </location>
</feature>
<feature type="strand" evidence="13">
    <location>
        <begin position="318"/>
        <end position="321"/>
    </location>
</feature>
<feature type="helix" evidence="13">
    <location>
        <begin position="326"/>
        <end position="332"/>
    </location>
</feature>
<feature type="strand" evidence="13">
    <location>
        <begin position="342"/>
        <end position="344"/>
    </location>
</feature>
<feature type="strand" evidence="13">
    <location>
        <begin position="346"/>
        <end position="348"/>
    </location>
</feature>
<feature type="strand" evidence="13">
    <location>
        <begin position="350"/>
        <end position="357"/>
    </location>
</feature>
<feature type="helix" evidence="13">
    <location>
        <begin position="362"/>
        <end position="371"/>
    </location>
</feature>
<feature type="helix" evidence="13">
    <location>
        <begin position="372"/>
        <end position="378"/>
    </location>
</feature>
<feature type="turn" evidence="13">
    <location>
        <begin position="379"/>
        <end position="381"/>
    </location>
</feature>
<feature type="strand" evidence="13">
    <location>
        <begin position="383"/>
        <end position="387"/>
    </location>
</feature>
<feature type="helix" evidence="13">
    <location>
        <begin position="405"/>
        <end position="426"/>
    </location>
</feature>
<feature type="turn" evidence="13">
    <location>
        <begin position="430"/>
        <end position="432"/>
    </location>
</feature>
<feature type="strand" evidence="13">
    <location>
        <begin position="433"/>
        <end position="438"/>
    </location>
</feature>
<feature type="helix" evidence="13">
    <location>
        <begin position="444"/>
        <end position="446"/>
    </location>
</feature>
<feature type="strand" evidence="13">
    <location>
        <begin position="457"/>
        <end position="459"/>
    </location>
</feature>
<feature type="turn" evidence="13">
    <location>
        <begin position="462"/>
        <end position="464"/>
    </location>
</feature>
<feature type="helix" evidence="13">
    <location>
        <begin position="466"/>
        <end position="478"/>
    </location>
</feature>
<feature type="helix" evidence="13">
    <location>
        <begin position="501"/>
        <end position="511"/>
    </location>
</feature>
<feature type="helix" evidence="13">
    <location>
        <begin position="525"/>
        <end position="527"/>
    </location>
</feature>
<feature type="helix" evidence="13">
    <location>
        <begin position="531"/>
        <end position="533"/>
    </location>
</feature>
<feature type="helix" evidence="13">
    <location>
        <begin position="535"/>
        <end position="550"/>
    </location>
</feature>
<feature type="helix" evidence="13">
    <location>
        <begin position="552"/>
        <end position="565"/>
    </location>
</feature>
<feature type="strand" evidence="13">
    <location>
        <begin position="569"/>
        <end position="571"/>
    </location>
</feature>
<feature type="helix" evidence="13">
    <location>
        <begin position="573"/>
        <end position="575"/>
    </location>
</feature>
<feature type="helix" evidence="13">
    <location>
        <begin position="581"/>
        <end position="583"/>
    </location>
</feature>
<feature type="strand" evidence="13">
    <location>
        <begin position="590"/>
        <end position="592"/>
    </location>
</feature>
<feature type="turn" evidence="13">
    <location>
        <begin position="593"/>
        <end position="595"/>
    </location>
</feature>
<feature type="strand" evidence="13">
    <location>
        <begin position="596"/>
        <end position="599"/>
    </location>
</feature>
<feature type="strand" evidence="13">
    <location>
        <begin position="607"/>
        <end position="613"/>
    </location>
</feature>
<feature type="strand" evidence="13">
    <location>
        <begin position="615"/>
        <end position="621"/>
    </location>
</feature>
<feature type="turn" evidence="13">
    <location>
        <begin position="622"/>
        <end position="624"/>
    </location>
</feature>
<feature type="strand" evidence="13">
    <location>
        <begin position="627"/>
        <end position="637"/>
    </location>
</feature>
<feature type="strand" evidence="13">
    <location>
        <begin position="644"/>
        <end position="648"/>
    </location>
</feature>
<feature type="helix" evidence="13">
    <location>
        <begin position="654"/>
        <end position="662"/>
    </location>
</feature>
<proteinExistence type="evidence at protein level"/>
<accession>A9CEZ0</accession>
<reference key="1">
    <citation type="journal article" date="2001" name="Science">
        <title>The genome of the natural genetic engineer Agrobacterium tumefaciens C58.</title>
        <authorList>
            <person name="Wood D.W."/>
            <person name="Setubal J.C."/>
            <person name="Kaul R."/>
            <person name="Monks D.E."/>
            <person name="Kitajima J.P."/>
            <person name="Okura V.K."/>
            <person name="Zhou Y."/>
            <person name="Chen L."/>
            <person name="Wood G.E."/>
            <person name="Almeida N.F. Jr."/>
            <person name="Woo L."/>
            <person name="Chen Y."/>
            <person name="Paulsen I.T."/>
            <person name="Eisen J.A."/>
            <person name="Karp P.D."/>
            <person name="Bovee D. Sr."/>
            <person name="Chapman P."/>
            <person name="Clendenning J."/>
            <person name="Deatherage G."/>
            <person name="Gillet W."/>
            <person name="Grant C."/>
            <person name="Kutyavin T."/>
            <person name="Levy R."/>
            <person name="Li M.-J."/>
            <person name="McClelland E."/>
            <person name="Palmieri A."/>
            <person name="Raymond C."/>
            <person name="Rouse G."/>
            <person name="Saenphimmachak C."/>
            <person name="Wu Z."/>
            <person name="Romero P."/>
            <person name="Gordon D."/>
            <person name="Zhang S."/>
            <person name="Yoo H."/>
            <person name="Tao Y."/>
            <person name="Biddle P."/>
            <person name="Jung M."/>
            <person name="Krespan W."/>
            <person name="Perry M."/>
            <person name="Gordon-Kamm B."/>
            <person name="Liao L."/>
            <person name="Kim S."/>
            <person name="Hendrick C."/>
            <person name="Zhao Z.-Y."/>
            <person name="Dolan M."/>
            <person name="Chumley F."/>
            <person name="Tingey S.V."/>
            <person name="Tomb J.-F."/>
            <person name="Gordon M.P."/>
            <person name="Olson M.V."/>
            <person name="Nester E.W."/>
        </authorList>
    </citation>
    <scope>NUCLEOTIDE SEQUENCE [LARGE SCALE GENOMIC DNA]</scope>
    <source>
        <strain>C58 / ATCC 33970</strain>
    </source>
</reference>
<reference key="2">
    <citation type="journal article" date="2001" name="Science">
        <title>Genome sequence of the plant pathogen and biotechnology agent Agrobacterium tumefaciens C58.</title>
        <authorList>
            <person name="Goodner B."/>
            <person name="Hinkle G."/>
            <person name="Gattung S."/>
            <person name="Miller N."/>
            <person name="Blanchard M."/>
            <person name="Qurollo B."/>
            <person name="Goldman B.S."/>
            <person name="Cao Y."/>
            <person name="Askenazi M."/>
            <person name="Halling C."/>
            <person name="Mullin L."/>
            <person name="Houmiel K."/>
            <person name="Gordon J."/>
            <person name="Vaudin M."/>
            <person name="Iartchouk O."/>
            <person name="Epp A."/>
            <person name="Liu F."/>
            <person name="Wollam C."/>
            <person name="Allinger M."/>
            <person name="Doughty D."/>
            <person name="Scott C."/>
            <person name="Lappas C."/>
            <person name="Markelz B."/>
            <person name="Flanagan C."/>
            <person name="Crowell C."/>
            <person name="Gurson J."/>
            <person name="Lomo C."/>
            <person name="Sear C."/>
            <person name="Strub G."/>
            <person name="Cielo C."/>
            <person name="Slater S."/>
        </authorList>
    </citation>
    <scope>NUCLEOTIDE SEQUENCE [LARGE SCALE GENOMIC DNA]</scope>
    <source>
        <strain>C58 / ATCC 33970</strain>
    </source>
</reference>
<reference evidence="10 11" key="3">
    <citation type="journal article" date="2018" name="ACS Cent. Sci.">
        <title>Structural and Biochemical Insights into the Function and Evolution of Sulfoquinovosidases.</title>
        <authorList>
            <person name="Abayakoon P."/>
            <person name="Jin Y."/>
            <person name="Lingford J.P."/>
            <person name="Petricevic M."/>
            <person name="John A."/>
            <person name="Ryan E."/>
            <person name="Wai-Ying Mui J."/>
            <person name="Pires D.E.V."/>
            <person name="Ascher D.B."/>
            <person name="Davies G.J."/>
            <person name="Goddard-Borger E.D."/>
            <person name="Williams S.J."/>
        </authorList>
    </citation>
    <scope>X-RAY CRYSTALLOGRAPHY (1.77 ANGSTROMS) OF WILD-TYPE IN COMPLEX WITH THE AZA-SUGAR INHIBITOR IFGSQ AND MUTANT ASN-455 IN COMPLEX WITH THE SUBSTRATE ANALOG PNPSQ</scope>
    <scope>FUNCTION</scope>
    <scope>CATALYTIC ACTIVITY</scope>
    <scope>BIOPHYSICOCHEMICAL PROPERTIES</scope>
    <scope>DOMAIN</scope>
    <scope>MUTAGENESIS OF LYS-245 AND GLU-270</scope>
    <source>
        <strain>C58 / ATCC 33970</strain>
    </source>
</reference>
<reference evidence="12" key="4">
    <citation type="journal article" date="2022" name="Proc. Natl. Acad. Sci. U.S.A.">
        <title>Oxidative desulfurization pathway for complete catabolism of sulfoquinovose by bacteria.</title>
        <authorList>
            <person name="Sharma M."/>
            <person name="Lingford J.P."/>
            <person name="Petricevic M."/>
            <person name="Snow A.J.D."/>
            <person name="Zhang Y."/>
            <person name="Jaervaa M.A."/>
            <person name="Mui J.W."/>
            <person name="Scott N.E."/>
            <person name="Saunders E.C."/>
            <person name="Mao R."/>
            <person name="Epa R."/>
            <person name="da Silva B.M."/>
            <person name="Pires D.E.V."/>
            <person name="Ascher D.B."/>
            <person name="McConville M.J."/>
            <person name="Davies G.J."/>
            <person name="Williams S.J."/>
            <person name="Goddard-Borger E.D."/>
        </authorList>
    </citation>
    <scope>X-RAY CRYSTALLOGRAPHY (2.15 ANGSTROMS) OF MUTANT ASN-455 IN COMPLEX WITH SULFOQUINOVOSYL GLYCEROL</scope>
    <scope>FUNCTION</scope>
    <source>
        <strain>C58 / ATCC 33970</strain>
    </source>
</reference>
<name>SQASE_AGRFC</name>